<proteinExistence type="inferred from homology"/>
<dbReference type="EMBL" id="FM177140">
    <property type="protein sequence ID" value="CAQ65836.1"/>
    <property type="molecule type" value="Genomic_DNA"/>
</dbReference>
<dbReference type="SMR" id="B3W7G6"/>
<dbReference type="KEGG" id="lcb:LCABL_07110"/>
<dbReference type="HOGENOM" id="CLU_117144_1_2_9"/>
<dbReference type="Gene3D" id="3.30.110.70">
    <property type="entry name" value="Hypothetical protein apc22750. Chain B"/>
    <property type="match status" value="1"/>
</dbReference>
<dbReference type="HAMAP" id="MF_00338">
    <property type="entry name" value="UPF0145"/>
    <property type="match status" value="1"/>
</dbReference>
<dbReference type="InterPro" id="IPR035439">
    <property type="entry name" value="UPF0145_dom_sf"/>
</dbReference>
<dbReference type="InterPro" id="IPR002765">
    <property type="entry name" value="UPF0145_YbjQ-like"/>
</dbReference>
<dbReference type="PANTHER" id="PTHR34068:SF2">
    <property type="entry name" value="UPF0145 PROTEIN SCO3412"/>
    <property type="match status" value="1"/>
</dbReference>
<dbReference type="PANTHER" id="PTHR34068">
    <property type="entry name" value="UPF0145 PROTEIN YBJQ"/>
    <property type="match status" value="1"/>
</dbReference>
<dbReference type="Pfam" id="PF01906">
    <property type="entry name" value="YbjQ_1"/>
    <property type="match status" value="1"/>
</dbReference>
<dbReference type="SUPFAM" id="SSF117782">
    <property type="entry name" value="YbjQ-like"/>
    <property type="match status" value="1"/>
</dbReference>
<evidence type="ECO:0000255" key="1">
    <source>
        <dbReference type="HAMAP-Rule" id="MF_00338"/>
    </source>
</evidence>
<protein>
    <recommendedName>
        <fullName evidence="1">UPF0145 protein LCABL_07110</fullName>
    </recommendedName>
</protein>
<organism>
    <name type="scientific">Lacticaseibacillus casei (strain BL23)</name>
    <name type="common">Lactobacillus casei</name>
    <dbReference type="NCBI Taxonomy" id="543734"/>
    <lineage>
        <taxon>Bacteria</taxon>
        <taxon>Bacillati</taxon>
        <taxon>Bacillota</taxon>
        <taxon>Bacilli</taxon>
        <taxon>Lactobacillales</taxon>
        <taxon>Lactobacillaceae</taxon>
        <taxon>Lacticaseibacillus</taxon>
    </lineage>
</organism>
<name>Y711_LACCB</name>
<accession>B3W7G6</accession>
<gene>
    <name type="ordered locus">LCABL_07110</name>
</gene>
<sequence>MAQEILITTTENIPGKKYEVIGEVFGLTTQSKNVISNIGAGLKNIVGGEIKAYSDMLHESREKAIERLRDEAQKAGGDAVVMMRFDSGSIGGDMQSVVAYGTAVKFLN</sequence>
<feature type="chain" id="PRO_1000120003" description="UPF0145 protein LCABL_07110">
    <location>
        <begin position="1"/>
        <end position="108"/>
    </location>
</feature>
<comment type="similarity">
    <text evidence="1">Belongs to the UPF0145 family.</text>
</comment>
<reference key="1">
    <citation type="submission" date="2008-06" db="EMBL/GenBank/DDBJ databases">
        <title>Lactobacillus casei BL23 complete genome sequence.</title>
        <authorList>
            <person name="Maze A."/>
            <person name="Boel G."/>
            <person name="Bourand A."/>
            <person name="Loux V."/>
            <person name="Gibrat J.F."/>
            <person name="Zuniga M."/>
            <person name="Hartke A."/>
            <person name="Deutscher J."/>
        </authorList>
    </citation>
    <scope>NUCLEOTIDE SEQUENCE [LARGE SCALE GENOMIC DNA]</scope>
    <source>
        <strain>BL23</strain>
    </source>
</reference>